<sequence length="474" mass="49910">MFKPSFVALALVSYATAQASAPQWGQCGGIGWTGPTACPSGWACQQLNAYYSQCLQGAAPAPARTTAAPPPPPATTAAPPPPTTSAPTGSSPVAGACGAIASTVPNYNNAKLPDPFTFANGTALRTKADWSCRRAEISALIQNYEAGTLPPKPPVVTASFSKSGNTGTLAITAGLSNSQTIKFSPTISYPSGTPPANGWPLIIAYEGGSIPIPAGVATLTYSNSDMAQQNSASSRGQGLFYQLYGSTHSASAMTAWVWGVSRIIDALEMTPTAQINTQRIGVTGCSRDGKGALMAGAFEERIALTIPQESGSGGDACWRLSKYEIDNGNQVQDAVEIVGENVWFSTNFNNYVQKLPTVPEDHHLLAAMVAPRAMISFENTDYLWLSPMSSFGCMTAAHTVWQGLGIADSHGFAQVGGHAHCAWPSSLTPQLNAFINRFLLDQSATTNVFTTNNQFGKVQWNAANWITWTTPTLT</sequence>
<keyword id="KW-0002">3D-structure</keyword>
<keyword id="KW-1015">Disulfide bond</keyword>
<keyword id="KW-0325">Glycoprotein</keyword>
<keyword id="KW-0378">Hydrolase</keyword>
<keyword id="KW-0439">Lignin degradation</keyword>
<keyword id="KW-0964">Secreted</keyword>
<keyword id="KW-0719">Serine esterase</keyword>
<keyword id="KW-0732">Signal</keyword>
<comment type="function">
    <text evidence="6 7">Glucuronoyl esterase which may play a significant role in biomass degradation, as it is considered to disconnect hemicellulose from lignin through the hydrolysis of the ester bond between 4-O-methyl-D-glucuronic acid residues of glucuronoxylans and aromatic alcohols of lignin (PubMed:25425346, PubMed:26712478).</text>
</comment>
<comment type="catalytic activity">
    <reaction evidence="6 7">
        <text>a 4-O-methyl-alpha-D-glucuronosyl ester derivative + H2O = 4-O-methyl-alpha-D-glucuronate derivative + an alcohol + H(+)</text>
        <dbReference type="Rhea" id="RHEA:67452"/>
        <dbReference type="ChEBI" id="CHEBI:15377"/>
        <dbReference type="ChEBI" id="CHEBI:15378"/>
        <dbReference type="ChEBI" id="CHEBI:30879"/>
        <dbReference type="ChEBI" id="CHEBI:171667"/>
        <dbReference type="ChEBI" id="CHEBI:171668"/>
        <dbReference type="EC" id="3.1.1.117"/>
    </reaction>
    <physiologicalReaction direction="left-to-right" evidence="10 11">
        <dbReference type="Rhea" id="RHEA:67453"/>
    </physiologicalReaction>
</comment>
<comment type="biophysicochemical properties">
    <kinetics>
        <KM evidence="6">4.6 mM for benzyl (methyl 4-O-methyl-alpha-D-glucopyranoside) uronate</KM>
        <KM evidence="6">80 mM for benzyl (methyl alpha-D-glucopyranoside) uronate</KM>
        <KM evidence="6">55 mM for phenylpropyl (methyl alpha-D-glucopyranoside) uronate</KM>
        <KM evidence="6">8.9 mM for phenyl (methyl alpha-D-glucopyranoside) uronate</KM>
        <KM evidence="7">4.6 mM for threo-l-[4-(benzyloxy)-3-methoxyphenyl]-3-hydroxy-2- (2-methoxyphenoxy) propyl (methyl 4-O-methyl-alpha-D-glucopyranosid) uronate</KM>
    </kinetics>
</comment>
<comment type="subcellular location">
    <subcellularLocation>
        <location evidence="6">Secreted</location>
    </subcellularLocation>
</comment>
<comment type="PTM">
    <text evidence="6">N-glycosylated (PubMed:25425346).</text>
</comment>
<comment type="similarity">
    <text evidence="9">Belongs to the carbohydrate esterase 15 (CE15) family.</text>
</comment>
<protein>
    <recommendedName>
        <fullName evidence="9">4-O-methyl-glucuronoyl methylesterase</fullName>
        <ecNumber evidence="6 7">3.1.1.117</ecNumber>
    </recommendedName>
    <alternativeName>
        <fullName evidence="8">Glucuronoyl esterase</fullName>
        <shortName evidence="8">GE</shortName>
    </alternativeName>
</protein>
<accession>A0A0A7EQR3</accession>
<reference key="1">
    <citation type="journal article" date="2015" name="Biotechnol. Bioeng.">
        <title>Enzymatic degradation of lignin-carbohydrate complexes (LCCs): model studies using a fungal glucuronoyl esterase from Cerrena unicolor.</title>
        <authorList>
            <person name="d'Errico C."/>
            <person name="Joergensen J.O."/>
            <person name="Krogh K.B."/>
            <person name="Spodsberg N."/>
            <person name="Madsen R."/>
            <person name="Monrad R.N."/>
        </authorList>
    </citation>
    <scope>NUCLEOTIDE SEQUENCE [MRNA]</scope>
    <scope>GLYCOSYLATION</scope>
    <scope>FUNCTION</scope>
    <scope>CATALYTIC ACTIVITY</scope>
    <scope>BIOPHYSICOCHEMICAL PROPERTIES</scope>
</reference>
<reference key="2">
    <citation type="journal article" date="2016" name="J. Biotechnol.">
        <title>Improved biomass degradation using fungal glucuronoyl-esterases-hydrolysis of natural corn fiber substrate.</title>
        <authorList>
            <person name="d'Errico C."/>
            <person name="Boerjesson J."/>
            <person name="Ding H."/>
            <person name="Krogh K.B."/>
            <person name="Spodsberg N."/>
            <person name="Madsen R."/>
            <person name="Monrad R.N."/>
        </authorList>
    </citation>
    <scope>FUNCTION</scope>
    <scope>CATALYTIC ACTIVITY</scope>
    <scope>BIOPHYSICOCHEMICAL PROPERTIES</scope>
</reference>
<proteinExistence type="evidence at protein level"/>
<organism evidence="12">
    <name type="scientific">Cerrena unicolor</name>
    <name type="common">Canker rot fungus</name>
    <name type="synonym">Daedalea unicolor</name>
    <dbReference type="NCBI Taxonomy" id="90312"/>
    <lineage>
        <taxon>Eukaryota</taxon>
        <taxon>Fungi</taxon>
        <taxon>Dikarya</taxon>
        <taxon>Basidiomycota</taxon>
        <taxon>Agaricomycotina</taxon>
        <taxon>Agaricomycetes</taxon>
        <taxon>Polyporales</taxon>
        <taxon>Cerrenaceae</taxon>
        <taxon>Cerrena</taxon>
    </lineage>
</organism>
<dbReference type="EC" id="3.1.1.117" evidence="6 7"/>
<dbReference type="EMBL" id="KM875459">
    <property type="protein sequence ID" value="AIY68500.1"/>
    <property type="molecule type" value="mRNA"/>
</dbReference>
<dbReference type="PDB" id="6RTV">
    <property type="method" value="X-ray"/>
    <property type="resolution" value="1.46 A"/>
    <property type="chains" value="A/B=95-474"/>
</dbReference>
<dbReference type="PDB" id="6RU1">
    <property type="method" value="X-ray"/>
    <property type="resolution" value="1.39 A"/>
    <property type="chains" value="A/B=95-474"/>
</dbReference>
<dbReference type="PDB" id="6RU2">
    <property type="method" value="X-ray"/>
    <property type="resolution" value="1.96 A"/>
    <property type="chains" value="A/B=95-474"/>
</dbReference>
<dbReference type="PDB" id="6RV7">
    <property type="method" value="X-ray"/>
    <property type="resolution" value="1.73 A"/>
    <property type="chains" value="A/B=95-474"/>
</dbReference>
<dbReference type="PDB" id="6RV8">
    <property type="method" value="X-ray"/>
    <property type="resolution" value="1.85 A"/>
    <property type="chains" value="A/B=18-474"/>
</dbReference>
<dbReference type="PDB" id="6RV9">
    <property type="method" value="X-ray"/>
    <property type="resolution" value="1.64 A"/>
    <property type="chains" value="A/B=95-474"/>
</dbReference>
<dbReference type="PDBsum" id="6RTV"/>
<dbReference type="PDBsum" id="6RU1"/>
<dbReference type="PDBsum" id="6RU2"/>
<dbReference type="PDBsum" id="6RV7"/>
<dbReference type="PDBsum" id="6RV8"/>
<dbReference type="PDBsum" id="6RV9"/>
<dbReference type="SASBDB" id="A0A0A7EQR3"/>
<dbReference type="SMR" id="A0A0A7EQR3"/>
<dbReference type="ESTHER" id="cerui-gce">
    <property type="family name" value="Glucuronoyl_esterase"/>
</dbReference>
<dbReference type="BRENDA" id="3.1.1.117">
    <property type="organism ID" value="8864"/>
</dbReference>
<dbReference type="SABIO-RK" id="A0A0A7EQR3"/>
<dbReference type="GO" id="GO:0005576">
    <property type="term" value="C:extracellular region"/>
    <property type="evidence" value="ECO:0007669"/>
    <property type="project" value="UniProtKB-SubCell"/>
</dbReference>
<dbReference type="GO" id="GO:0052689">
    <property type="term" value="F:carboxylic ester hydrolase activity"/>
    <property type="evidence" value="ECO:0007669"/>
    <property type="project" value="UniProtKB-KW"/>
</dbReference>
<dbReference type="GO" id="GO:0030248">
    <property type="term" value="F:cellulose binding"/>
    <property type="evidence" value="ECO:0007669"/>
    <property type="project" value="InterPro"/>
</dbReference>
<dbReference type="GO" id="GO:0005975">
    <property type="term" value="P:carbohydrate metabolic process"/>
    <property type="evidence" value="ECO:0007669"/>
    <property type="project" value="InterPro"/>
</dbReference>
<dbReference type="GO" id="GO:0046274">
    <property type="term" value="P:lignin catabolic process"/>
    <property type="evidence" value="ECO:0007669"/>
    <property type="project" value="UniProtKB-KW"/>
</dbReference>
<dbReference type="Gene3D" id="3.40.50.1820">
    <property type="entry name" value="alpha/beta hydrolase"/>
    <property type="match status" value="1"/>
</dbReference>
<dbReference type="InterPro" id="IPR029058">
    <property type="entry name" value="AB_hydrolase_fold"/>
</dbReference>
<dbReference type="InterPro" id="IPR035971">
    <property type="entry name" value="CBD_sf"/>
</dbReference>
<dbReference type="InterPro" id="IPR000254">
    <property type="entry name" value="Cellulose-bd_dom_fun"/>
</dbReference>
<dbReference type="InterPro" id="IPR054579">
    <property type="entry name" value="GCE-like_dom"/>
</dbReference>
<dbReference type="Pfam" id="PF00734">
    <property type="entry name" value="CBM_1"/>
    <property type="match status" value="1"/>
</dbReference>
<dbReference type="Pfam" id="PF22244">
    <property type="entry name" value="GCE_fung"/>
    <property type="match status" value="1"/>
</dbReference>
<dbReference type="SMART" id="SM00236">
    <property type="entry name" value="fCBD"/>
    <property type="match status" value="1"/>
</dbReference>
<dbReference type="SUPFAM" id="SSF53474">
    <property type="entry name" value="alpha/beta-Hydrolases"/>
    <property type="match status" value="1"/>
</dbReference>
<dbReference type="SUPFAM" id="SSF57180">
    <property type="entry name" value="Cellulose-binding domain"/>
    <property type="match status" value="1"/>
</dbReference>
<dbReference type="PROSITE" id="PS00562">
    <property type="entry name" value="CBM1_1"/>
    <property type="match status" value="1"/>
</dbReference>
<dbReference type="PROSITE" id="PS51164">
    <property type="entry name" value="CBM1_2"/>
    <property type="match status" value="1"/>
</dbReference>
<feature type="signal peptide" evidence="2">
    <location>
        <begin position="1"/>
        <end position="17"/>
    </location>
</feature>
<feature type="chain" id="PRO_5002038279" description="4-O-methyl-glucuronoyl methylesterase">
    <location>
        <begin position="18"/>
        <end position="474"/>
    </location>
</feature>
<feature type="domain" description="CBM1" evidence="4">
    <location>
        <begin position="19"/>
        <end position="55"/>
    </location>
</feature>
<feature type="region of interest" description="Disordered" evidence="5">
    <location>
        <begin position="61"/>
        <end position="91"/>
    </location>
</feature>
<feature type="short sequence motif" description="GXSYXG catalytic site motif" evidence="1">
    <location>
        <begin position="284"/>
        <end position="289"/>
    </location>
</feature>
<feature type="compositionally biased region" description="Pro residues" evidence="5">
    <location>
        <begin position="68"/>
        <end position="84"/>
    </location>
</feature>
<feature type="active site" description="Nucleophile" evidence="1">
    <location>
        <position position="286"/>
    </location>
</feature>
<feature type="active site" description="Proton donor/acceptor" evidence="1">
    <location>
        <position position="420"/>
    </location>
</feature>
<feature type="binding site" evidence="1">
    <location>
        <position position="290"/>
    </location>
    <ligand>
        <name>substrate</name>
    </ligand>
</feature>
<feature type="binding site" evidence="1">
    <location>
        <position position="332"/>
    </location>
    <ligand>
        <name>substrate</name>
    </ligand>
</feature>
<feature type="binding site" evidence="1">
    <location>
        <position position="340"/>
    </location>
    <ligand>
        <name>substrate</name>
    </ligand>
</feature>
<feature type="binding site" evidence="1">
    <location>
        <position position="384"/>
    </location>
    <ligand>
        <name>substrate</name>
    </ligand>
</feature>
<feature type="glycosylation site" description="N-linked (GlcNAc...) asparagine" evidence="3">
    <location>
        <position position="120"/>
    </location>
</feature>
<feature type="disulfide bond" evidence="1">
    <location>
        <begin position="285"/>
        <end position="421"/>
    </location>
</feature>
<feature type="disulfide bond" evidence="1">
    <location>
        <begin position="317"/>
        <end position="393"/>
    </location>
</feature>
<feature type="helix" evidence="13">
    <location>
        <begin position="127"/>
        <end position="144"/>
    </location>
</feature>
<feature type="strand" evidence="13">
    <location>
        <begin position="154"/>
        <end position="163"/>
    </location>
</feature>
<feature type="strand" evidence="13">
    <location>
        <begin position="166"/>
        <end position="174"/>
    </location>
</feature>
<feature type="strand" evidence="13">
    <location>
        <begin position="180"/>
        <end position="183"/>
    </location>
</feature>
<feature type="strand" evidence="13">
    <location>
        <begin position="186"/>
        <end position="188"/>
    </location>
</feature>
<feature type="strand" evidence="13">
    <location>
        <begin position="199"/>
        <end position="205"/>
    </location>
</feature>
<feature type="strand" evidence="13">
    <location>
        <begin position="216"/>
        <end position="221"/>
    </location>
</feature>
<feature type="helix" evidence="13">
    <location>
        <begin position="223"/>
        <end position="226"/>
    </location>
</feature>
<feature type="helix" evidence="13">
    <location>
        <begin position="232"/>
        <end position="234"/>
    </location>
</feature>
<feature type="helix" evidence="13">
    <location>
        <begin position="239"/>
        <end position="244"/>
    </location>
</feature>
<feature type="helix" evidence="13">
    <location>
        <begin position="252"/>
        <end position="268"/>
    </location>
</feature>
<feature type="helix" evidence="13">
    <location>
        <begin position="271"/>
        <end position="273"/>
    </location>
</feature>
<feature type="strand" evidence="13">
    <location>
        <begin position="275"/>
        <end position="285"/>
    </location>
</feature>
<feature type="helix" evidence="13">
    <location>
        <begin position="287"/>
        <end position="298"/>
    </location>
</feature>
<feature type="strand" evidence="13">
    <location>
        <begin position="303"/>
        <end position="309"/>
    </location>
</feature>
<feature type="turn" evidence="13">
    <location>
        <begin position="312"/>
        <end position="315"/>
    </location>
</feature>
<feature type="helix" evidence="13">
    <location>
        <begin position="318"/>
        <end position="326"/>
    </location>
</feature>
<feature type="helix" evidence="13">
    <location>
        <begin position="334"/>
        <end position="340"/>
    </location>
</feature>
<feature type="strand" evidence="13">
    <location>
        <begin position="342"/>
        <end position="344"/>
    </location>
</feature>
<feature type="helix" evidence="13">
    <location>
        <begin position="346"/>
        <end position="350"/>
    </location>
</feature>
<feature type="turn" evidence="13">
    <location>
        <begin position="351"/>
        <end position="353"/>
    </location>
</feature>
<feature type="helix" evidence="13">
    <location>
        <begin position="355"/>
        <end position="357"/>
    </location>
</feature>
<feature type="helix" evidence="13">
    <location>
        <begin position="362"/>
        <end position="367"/>
    </location>
</feature>
<feature type="turn" evidence="13">
    <location>
        <begin position="368"/>
        <end position="371"/>
    </location>
</feature>
<feature type="strand" evidence="13">
    <location>
        <begin position="372"/>
        <end position="379"/>
    </location>
</feature>
<feature type="helix" evidence="13">
    <location>
        <begin position="383"/>
        <end position="385"/>
    </location>
</feature>
<feature type="helix" evidence="13">
    <location>
        <begin position="387"/>
        <end position="403"/>
    </location>
</feature>
<feature type="helix" evidence="13">
    <location>
        <begin position="407"/>
        <end position="409"/>
    </location>
</feature>
<feature type="strand" evidence="13">
    <location>
        <begin position="410"/>
        <end position="415"/>
    </location>
</feature>
<feature type="helix" evidence="13">
    <location>
        <begin position="425"/>
        <end position="427"/>
    </location>
</feature>
<feature type="helix" evidence="13">
    <location>
        <begin position="428"/>
        <end position="438"/>
    </location>
</feature>
<feature type="helix" evidence="13">
    <location>
        <begin position="462"/>
        <end position="464"/>
    </location>
</feature>
<name>GCE_CERUI</name>
<evidence type="ECO:0000250" key="1">
    <source>
        <dbReference type="UniProtKB" id="G2QJR6"/>
    </source>
</evidence>
<evidence type="ECO:0000255" key="2"/>
<evidence type="ECO:0000255" key="3">
    <source>
        <dbReference type="PROSITE-ProRule" id="PRU00498"/>
    </source>
</evidence>
<evidence type="ECO:0000255" key="4">
    <source>
        <dbReference type="PROSITE-ProRule" id="PRU00597"/>
    </source>
</evidence>
<evidence type="ECO:0000256" key="5">
    <source>
        <dbReference type="SAM" id="MobiDB-lite"/>
    </source>
</evidence>
<evidence type="ECO:0000269" key="6">
    <source>
    </source>
</evidence>
<evidence type="ECO:0000269" key="7">
    <source>
    </source>
</evidence>
<evidence type="ECO:0000303" key="8">
    <source>
    </source>
</evidence>
<evidence type="ECO:0000305" key="9"/>
<evidence type="ECO:0000305" key="10">
    <source>
    </source>
</evidence>
<evidence type="ECO:0000305" key="11">
    <source>
    </source>
</evidence>
<evidence type="ECO:0000312" key="12">
    <source>
        <dbReference type="EMBL" id="AIY68500.1"/>
    </source>
</evidence>
<evidence type="ECO:0007829" key="13">
    <source>
        <dbReference type="PDB" id="6RU1"/>
    </source>
</evidence>